<evidence type="ECO:0000255" key="1">
    <source>
        <dbReference type="HAMAP-Rule" id="MF_01023"/>
    </source>
</evidence>
<keyword id="KW-0028">Amino-acid biosynthesis</keyword>
<keyword id="KW-0032">Aminotransferase</keyword>
<keyword id="KW-0368">Histidine biosynthesis</keyword>
<keyword id="KW-0663">Pyridoxal phosphate</keyword>
<keyword id="KW-0808">Transferase</keyword>
<comment type="catalytic activity">
    <reaction evidence="1">
        <text>L-histidinol phosphate + 2-oxoglutarate = 3-(imidazol-4-yl)-2-oxopropyl phosphate + L-glutamate</text>
        <dbReference type="Rhea" id="RHEA:23744"/>
        <dbReference type="ChEBI" id="CHEBI:16810"/>
        <dbReference type="ChEBI" id="CHEBI:29985"/>
        <dbReference type="ChEBI" id="CHEBI:57766"/>
        <dbReference type="ChEBI" id="CHEBI:57980"/>
        <dbReference type="EC" id="2.6.1.9"/>
    </reaction>
</comment>
<comment type="cofactor">
    <cofactor evidence="1">
        <name>pyridoxal 5'-phosphate</name>
        <dbReference type="ChEBI" id="CHEBI:597326"/>
    </cofactor>
</comment>
<comment type="pathway">
    <text evidence="1">Amino-acid biosynthesis; L-histidine biosynthesis; L-histidine from 5-phospho-alpha-D-ribose 1-diphosphate: step 7/9.</text>
</comment>
<comment type="subunit">
    <text evidence="1">Homodimer.</text>
</comment>
<comment type="similarity">
    <text evidence="1">Belongs to the class-II pyridoxal-phosphate-dependent aminotransferase family. Histidinol-phosphate aminotransferase subfamily.</text>
</comment>
<reference key="1">
    <citation type="journal article" date="2008" name="PLoS ONE">
        <title>Comparative analysis of Acinetobacters: three genomes for three lifestyles.</title>
        <authorList>
            <person name="Vallenet D."/>
            <person name="Nordmann P."/>
            <person name="Barbe V."/>
            <person name="Poirel L."/>
            <person name="Mangenot S."/>
            <person name="Bataille E."/>
            <person name="Dossat C."/>
            <person name="Gas S."/>
            <person name="Kreimeyer A."/>
            <person name="Lenoble P."/>
            <person name="Oztas S."/>
            <person name="Poulain J."/>
            <person name="Segurens B."/>
            <person name="Robert C."/>
            <person name="Abergel C."/>
            <person name="Claverie J.-M."/>
            <person name="Raoult D."/>
            <person name="Medigue C."/>
            <person name="Weissenbach J."/>
            <person name="Cruveiller S."/>
        </authorList>
    </citation>
    <scope>NUCLEOTIDE SEQUENCE [LARGE SCALE GENOMIC DNA]</scope>
    <source>
        <strain>AYE</strain>
    </source>
</reference>
<protein>
    <recommendedName>
        <fullName evidence="1">Histidinol-phosphate aminotransferase</fullName>
        <ecNumber evidence="1">2.6.1.9</ecNumber>
    </recommendedName>
    <alternativeName>
        <fullName evidence="1">Imidazole acetol-phosphate transaminase</fullName>
    </alternativeName>
</protein>
<name>HIS8_ACIBY</name>
<feature type="chain" id="PRO_1000135381" description="Histidinol-phosphate aminotransferase">
    <location>
        <begin position="1"/>
        <end position="361"/>
    </location>
</feature>
<feature type="modified residue" description="N6-(pyridoxal phosphate)lysine" evidence="1">
    <location>
        <position position="219"/>
    </location>
</feature>
<gene>
    <name evidence="1" type="primary">hisC</name>
    <name type="ordered locus">ABAYE3130</name>
</gene>
<sequence length="361" mass="40497">MTVSTAQMRFWSPEVRELEPYVPGEQPKIQNLLKLNTNENPYPPSPKVVEAVQEVLHEQADVLRLYPDPDATVLKQAIAKQQNIDVSQVFVGNGSDEVLAHIFKAFFLQDGPILYPDITYSFYPVYSQFFGTKTKEIPLNENFEIDVRDYTQPNGGVIITNPNAPTSIALSLAEIEQVLQANPDRVVVIDEAYVDFGAESAVSLINRYENLVVCQTTSKSRSLAGLRVGFAIAQSHLIAALEAVKNSFNSYPIDRFAIAAAVASFEDQAYFEEQCQKVITSREKLVRDLTELGFNVLPSKANFIFATHSQHDAGQLAQKLREQGIIVRYFNKPRINQFLRITVGTNEQNARLVQTLKQDIL</sequence>
<organism>
    <name type="scientific">Acinetobacter baumannii (strain AYE)</name>
    <dbReference type="NCBI Taxonomy" id="509173"/>
    <lineage>
        <taxon>Bacteria</taxon>
        <taxon>Pseudomonadati</taxon>
        <taxon>Pseudomonadota</taxon>
        <taxon>Gammaproteobacteria</taxon>
        <taxon>Moraxellales</taxon>
        <taxon>Moraxellaceae</taxon>
        <taxon>Acinetobacter</taxon>
        <taxon>Acinetobacter calcoaceticus/baumannii complex</taxon>
    </lineage>
</organism>
<proteinExistence type="inferred from homology"/>
<dbReference type="EC" id="2.6.1.9" evidence="1"/>
<dbReference type="EMBL" id="CU459141">
    <property type="protein sequence ID" value="CAM87940.1"/>
    <property type="molecule type" value="Genomic_DNA"/>
</dbReference>
<dbReference type="RefSeq" id="WP_000218892.1">
    <property type="nucleotide sequence ID" value="NZ_JBDGFB010000027.1"/>
</dbReference>
<dbReference type="SMR" id="B0V7Q2"/>
<dbReference type="EnsemblBacteria" id="CAM87940">
    <property type="protein sequence ID" value="CAM87940"/>
    <property type="gene ID" value="ABAYE3130"/>
</dbReference>
<dbReference type="KEGG" id="aby:ABAYE3130"/>
<dbReference type="HOGENOM" id="CLU_017584_3_0_6"/>
<dbReference type="UniPathway" id="UPA00031">
    <property type="reaction ID" value="UER00012"/>
</dbReference>
<dbReference type="GO" id="GO:0004400">
    <property type="term" value="F:histidinol-phosphate transaminase activity"/>
    <property type="evidence" value="ECO:0007669"/>
    <property type="project" value="UniProtKB-UniRule"/>
</dbReference>
<dbReference type="GO" id="GO:0030170">
    <property type="term" value="F:pyridoxal phosphate binding"/>
    <property type="evidence" value="ECO:0007669"/>
    <property type="project" value="InterPro"/>
</dbReference>
<dbReference type="GO" id="GO:0000105">
    <property type="term" value="P:L-histidine biosynthetic process"/>
    <property type="evidence" value="ECO:0007669"/>
    <property type="project" value="UniProtKB-UniRule"/>
</dbReference>
<dbReference type="CDD" id="cd00609">
    <property type="entry name" value="AAT_like"/>
    <property type="match status" value="1"/>
</dbReference>
<dbReference type="Gene3D" id="3.90.1150.10">
    <property type="entry name" value="Aspartate Aminotransferase, domain 1"/>
    <property type="match status" value="1"/>
</dbReference>
<dbReference type="Gene3D" id="3.40.640.10">
    <property type="entry name" value="Type I PLP-dependent aspartate aminotransferase-like (Major domain)"/>
    <property type="match status" value="1"/>
</dbReference>
<dbReference type="HAMAP" id="MF_01023">
    <property type="entry name" value="HisC_aminotrans_2"/>
    <property type="match status" value="1"/>
</dbReference>
<dbReference type="InterPro" id="IPR004839">
    <property type="entry name" value="Aminotransferase_I/II_large"/>
</dbReference>
<dbReference type="InterPro" id="IPR005861">
    <property type="entry name" value="HisP_aminotrans"/>
</dbReference>
<dbReference type="InterPro" id="IPR050106">
    <property type="entry name" value="HistidinolP_aminotransfase"/>
</dbReference>
<dbReference type="InterPro" id="IPR015424">
    <property type="entry name" value="PyrdxlP-dep_Trfase"/>
</dbReference>
<dbReference type="InterPro" id="IPR015421">
    <property type="entry name" value="PyrdxlP-dep_Trfase_major"/>
</dbReference>
<dbReference type="InterPro" id="IPR015422">
    <property type="entry name" value="PyrdxlP-dep_Trfase_small"/>
</dbReference>
<dbReference type="NCBIfam" id="TIGR01141">
    <property type="entry name" value="hisC"/>
    <property type="match status" value="1"/>
</dbReference>
<dbReference type="PANTHER" id="PTHR43643:SF3">
    <property type="entry name" value="HISTIDINOL-PHOSPHATE AMINOTRANSFERASE"/>
    <property type="match status" value="1"/>
</dbReference>
<dbReference type="PANTHER" id="PTHR43643">
    <property type="entry name" value="HISTIDINOL-PHOSPHATE AMINOTRANSFERASE 2"/>
    <property type="match status" value="1"/>
</dbReference>
<dbReference type="Pfam" id="PF00155">
    <property type="entry name" value="Aminotran_1_2"/>
    <property type="match status" value="1"/>
</dbReference>
<dbReference type="SUPFAM" id="SSF53383">
    <property type="entry name" value="PLP-dependent transferases"/>
    <property type="match status" value="1"/>
</dbReference>
<accession>B0V7Q2</accession>